<evidence type="ECO:0000305" key="1"/>
<comment type="tissue specificity">
    <text>Placenta.</text>
</comment>
<comment type="PTM">
    <text evidence="1">Glycosylated.</text>
</comment>
<comment type="similarity">
    <text evidence="1">Belongs to the peptidase A1 family.</text>
</comment>
<keyword id="KW-0064">Aspartyl protease</keyword>
<keyword id="KW-0903">Direct protein sequencing</keyword>
<keyword id="KW-0325">Glycoprotein</keyword>
<keyword id="KW-0378">Hydrolase</keyword>
<keyword id="KW-0645">Protease</keyword>
<keyword id="KW-1185">Reference proteome</keyword>
<dbReference type="EC" id="3.4.23.-"/>
<dbReference type="STRING" id="9925.ENSCHIP00000023765"/>
<dbReference type="Proteomes" id="UP000291000">
    <property type="component" value="Unassembled WGS sequence"/>
</dbReference>
<dbReference type="Proteomes" id="UP000694566">
    <property type="component" value="Unplaced"/>
</dbReference>
<dbReference type="GO" id="GO:0004190">
    <property type="term" value="F:aspartic-type endopeptidase activity"/>
    <property type="evidence" value="ECO:0007669"/>
    <property type="project" value="UniProtKB-KW"/>
</dbReference>
<dbReference type="GO" id="GO:0006508">
    <property type="term" value="P:proteolysis"/>
    <property type="evidence" value="ECO:0007669"/>
    <property type="project" value="UniProtKB-KW"/>
</dbReference>
<proteinExistence type="evidence at protein level"/>
<organism>
    <name type="scientific">Capra hircus</name>
    <name type="common">Goat</name>
    <dbReference type="NCBI Taxonomy" id="9925"/>
    <lineage>
        <taxon>Eukaryota</taxon>
        <taxon>Metazoa</taxon>
        <taxon>Chordata</taxon>
        <taxon>Craniata</taxon>
        <taxon>Vertebrata</taxon>
        <taxon>Euteleostomi</taxon>
        <taxon>Mammalia</taxon>
        <taxon>Eutheria</taxon>
        <taxon>Laurasiatheria</taxon>
        <taxon>Artiodactyla</taxon>
        <taxon>Ruminantia</taxon>
        <taxon>Pecora</taxon>
        <taxon>Bovidae</taxon>
        <taxon>Caprinae</taxon>
        <taxon>Capra</taxon>
    </lineage>
</organism>
<reference key="1">
    <citation type="journal article" date="1998" name="Biol. Reprod.">
        <title>Isolation and partial characterization of a pregnancy-associated glycoprotein family from the goat placenta.</title>
        <authorList>
            <person name="Garbayo J.M."/>
            <person name="Remy B."/>
            <person name="Alabart J.L."/>
            <person name="Folch J."/>
            <person name="Wattiez R."/>
            <person name="Falmagne P."/>
            <person name="Beckers J.-F.M.P."/>
        </authorList>
    </citation>
    <scope>PROTEIN SEQUENCE</scope>
    <source>
        <tissue>Placenta</tissue>
    </source>
</reference>
<accession>P80934</accession>
<sequence length="27" mass="2962">RGSXLTTLPLRNIMDMLHMGXITIGTP</sequence>
<gene>
    <name type="primary">PAG59</name>
</gene>
<name>PAG59_CAPHI</name>
<protein>
    <recommendedName>
        <fullName>Pregnancy-associated glycoprotein 59</fullName>
        <shortName>PAG 59</shortName>
        <ecNumber>3.4.23.-</ecNumber>
    </recommendedName>
</protein>
<feature type="chain" id="PRO_0000199530" description="Pregnancy-associated glycoprotein 59">
    <location>
        <begin position="1"/>
        <end position="27" status="greater than"/>
    </location>
</feature>
<feature type="non-terminal residue">
    <location>
        <position position="27"/>
    </location>
</feature>